<organism>
    <name type="scientific">Acanthamoeba polyphaga mimivirus</name>
    <name type="common">APMV</name>
    <dbReference type="NCBI Taxonomy" id="212035"/>
    <lineage>
        <taxon>Viruses</taxon>
        <taxon>Varidnaviria</taxon>
        <taxon>Bamfordvirae</taxon>
        <taxon>Nucleocytoviricota</taxon>
        <taxon>Megaviricetes</taxon>
        <taxon>Imitervirales</taxon>
        <taxon>Mimiviridae</taxon>
        <taxon>Megamimivirinae</taxon>
        <taxon>Mimivirus</taxon>
        <taxon>Mimivirus bradfordmassiliense</taxon>
    </lineage>
</organism>
<accession>Q5UQ11</accession>
<reference key="1">
    <citation type="journal article" date="2004" name="Science">
        <title>The 1.2-megabase genome sequence of Mimivirus.</title>
        <authorList>
            <person name="Raoult D."/>
            <person name="Audic S."/>
            <person name="Robert C."/>
            <person name="Abergel C."/>
            <person name="Renesto P."/>
            <person name="Ogata H."/>
            <person name="La Scola B."/>
            <person name="Susan M."/>
            <person name="Claverie J.-M."/>
        </authorList>
    </citation>
    <scope>NUCLEOTIDE SEQUENCE [LARGE SCALE GENOMIC DNA]</scope>
    <source>
        <strain>Rowbotham-Bradford</strain>
    </source>
</reference>
<organismHost>
    <name type="scientific">Acanthamoeba polyphaga</name>
    <name type="common">Amoeba</name>
    <dbReference type="NCBI Taxonomy" id="5757"/>
</organismHost>
<keyword id="KW-1185">Reference proteome</keyword>
<protein>
    <recommendedName>
        <fullName>Uncharacterized protein L191</fullName>
    </recommendedName>
</protein>
<name>YL191_MIMIV</name>
<feature type="chain" id="PRO_0000247242" description="Uncharacterized protein L191">
    <location>
        <begin position="1"/>
        <end position="276"/>
    </location>
</feature>
<sequence length="276" mass="32656">MQAMKPRINHNRLDENSFYKNGHIHHVRVQDQTIGWVRRVDRSIRTTVEFVVNVLQDYLTDAECSDFDVSHNIKEYLLKIPVVKSLEEMEDYLKQIPDGNISSTLAHIVSIPLGIPIEPYDLLVTDYQDTLHSFIDKIDNQAVREYLLPKIKSLKIGYWCAYTFLPETINQFHPLYLSWLDNKRVFSPNTLQLSEETRDKLDNFLEMYDIPDIGFFSVGDNGSKIIGWDYNYYRHTFCYVNLHEASNEVRKVWEFANQHFHIDTDFEQLEQLEQLE</sequence>
<gene>
    <name type="ordered locus">MIMI_L191</name>
</gene>
<dbReference type="EMBL" id="AY653733">
    <property type="protein sequence ID" value="AAV50465.1"/>
    <property type="molecule type" value="Genomic_DNA"/>
</dbReference>
<dbReference type="KEGG" id="vg:9924796"/>
<dbReference type="Proteomes" id="UP000001134">
    <property type="component" value="Genome"/>
</dbReference>
<proteinExistence type="predicted"/>